<keyword id="KW-0150">Chloroplast</keyword>
<keyword id="KW-0934">Plastid</keyword>
<keyword id="KW-0687">Ribonucleoprotein</keyword>
<keyword id="KW-0689">Ribosomal protein</keyword>
<keyword id="KW-0694">RNA-binding</keyword>
<keyword id="KW-0699">rRNA-binding</keyword>
<protein>
    <recommendedName>
        <fullName evidence="3">Small ribosomal subunit protein uS4c</fullName>
    </recommendedName>
    <alternativeName>
        <fullName>30S ribosomal protein S4, chloroplastic</fullName>
    </alternativeName>
</protein>
<name>RR4_POPAL</name>
<feature type="chain" id="PRO_0000277019" description="Small ribosomal subunit protein uS4c">
    <location>
        <begin position="1"/>
        <end position="201"/>
    </location>
</feature>
<feature type="domain" description="S4 RNA-binding">
    <location>
        <begin position="89"/>
        <end position="150"/>
    </location>
</feature>
<feature type="region of interest" description="Disordered" evidence="2">
    <location>
        <begin position="20"/>
        <end position="43"/>
    </location>
</feature>
<geneLocation type="chloroplast"/>
<evidence type="ECO:0000250" key="1"/>
<evidence type="ECO:0000256" key="2">
    <source>
        <dbReference type="SAM" id="MobiDB-lite"/>
    </source>
</evidence>
<evidence type="ECO:0000305" key="3"/>
<organism>
    <name type="scientific">Populus alba</name>
    <name type="common">White poplar</name>
    <dbReference type="NCBI Taxonomy" id="43335"/>
    <lineage>
        <taxon>Eukaryota</taxon>
        <taxon>Viridiplantae</taxon>
        <taxon>Streptophyta</taxon>
        <taxon>Embryophyta</taxon>
        <taxon>Tracheophyta</taxon>
        <taxon>Spermatophyta</taxon>
        <taxon>Magnoliopsida</taxon>
        <taxon>eudicotyledons</taxon>
        <taxon>Gunneridae</taxon>
        <taxon>Pentapetalae</taxon>
        <taxon>rosids</taxon>
        <taxon>fabids</taxon>
        <taxon>Malpighiales</taxon>
        <taxon>Salicaceae</taxon>
        <taxon>Saliceae</taxon>
        <taxon>Populus</taxon>
    </lineage>
</organism>
<comment type="function">
    <text evidence="1">One of the primary rRNA binding proteins, it binds directly to 16S rRNA where it nucleates assembly of the body of the 30S subunit.</text>
</comment>
<comment type="function">
    <text evidence="1">With S5 and S12 plays an important role in translational accuracy.</text>
</comment>
<comment type="subunit">
    <text evidence="1">Part of the 30S ribosomal subunit. Contacts protein S5. The interaction surface between S4 and S5 is involved in control of translational fidelity (By similarity).</text>
</comment>
<comment type="subcellular location">
    <subcellularLocation>
        <location>Plastid</location>
        <location>Chloroplast</location>
    </subcellularLocation>
</comment>
<comment type="similarity">
    <text evidence="3">Belongs to the universal ribosomal protein uS4 family.</text>
</comment>
<accession>Q14FF5</accession>
<dbReference type="EMBL" id="AP008956">
    <property type="protein sequence ID" value="BAE97207.1"/>
    <property type="molecule type" value="Genomic_DNA"/>
</dbReference>
<dbReference type="RefSeq" id="YP_665560.1">
    <property type="nucleotide sequence ID" value="NC_008235.1"/>
</dbReference>
<dbReference type="SMR" id="Q14FF5"/>
<dbReference type="GeneID" id="4178266"/>
<dbReference type="KEGG" id="palz:4178266"/>
<dbReference type="OrthoDB" id="7936at3646"/>
<dbReference type="GO" id="GO:0009507">
    <property type="term" value="C:chloroplast"/>
    <property type="evidence" value="ECO:0007669"/>
    <property type="project" value="UniProtKB-SubCell"/>
</dbReference>
<dbReference type="GO" id="GO:0015935">
    <property type="term" value="C:small ribosomal subunit"/>
    <property type="evidence" value="ECO:0007669"/>
    <property type="project" value="InterPro"/>
</dbReference>
<dbReference type="GO" id="GO:0019843">
    <property type="term" value="F:rRNA binding"/>
    <property type="evidence" value="ECO:0007669"/>
    <property type="project" value="UniProtKB-UniRule"/>
</dbReference>
<dbReference type="GO" id="GO:0003735">
    <property type="term" value="F:structural constituent of ribosome"/>
    <property type="evidence" value="ECO:0007669"/>
    <property type="project" value="InterPro"/>
</dbReference>
<dbReference type="GO" id="GO:0042274">
    <property type="term" value="P:ribosomal small subunit biogenesis"/>
    <property type="evidence" value="ECO:0007669"/>
    <property type="project" value="TreeGrafter"/>
</dbReference>
<dbReference type="GO" id="GO:0006412">
    <property type="term" value="P:translation"/>
    <property type="evidence" value="ECO:0007669"/>
    <property type="project" value="UniProtKB-UniRule"/>
</dbReference>
<dbReference type="CDD" id="cd00165">
    <property type="entry name" value="S4"/>
    <property type="match status" value="1"/>
</dbReference>
<dbReference type="FunFam" id="1.10.1050.10:FF:000002">
    <property type="entry name" value="30S ribosomal protein S4, chloroplastic"/>
    <property type="match status" value="1"/>
</dbReference>
<dbReference type="FunFam" id="3.10.290.10:FF:000081">
    <property type="entry name" value="30S ribosomal protein S4, chloroplastic"/>
    <property type="match status" value="1"/>
</dbReference>
<dbReference type="Gene3D" id="1.10.1050.10">
    <property type="entry name" value="Ribosomal Protein S4 Delta 41, Chain A, domain 1"/>
    <property type="match status" value="1"/>
</dbReference>
<dbReference type="Gene3D" id="3.10.290.10">
    <property type="entry name" value="RNA-binding S4 domain"/>
    <property type="match status" value="1"/>
</dbReference>
<dbReference type="HAMAP" id="MF_01306_B">
    <property type="entry name" value="Ribosomal_uS4_B"/>
    <property type="match status" value="1"/>
</dbReference>
<dbReference type="InterPro" id="IPR022801">
    <property type="entry name" value="Ribosomal_uS4"/>
</dbReference>
<dbReference type="InterPro" id="IPR005709">
    <property type="entry name" value="Ribosomal_uS4_bac-type"/>
</dbReference>
<dbReference type="InterPro" id="IPR018079">
    <property type="entry name" value="Ribosomal_uS4_CS"/>
</dbReference>
<dbReference type="InterPro" id="IPR001912">
    <property type="entry name" value="Ribosomal_uS4_N"/>
</dbReference>
<dbReference type="InterPro" id="IPR002942">
    <property type="entry name" value="S4_RNA-bd"/>
</dbReference>
<dbReference type="InterPro" id="IPR036986">
    <property type="entry name" value="S4_RNA-bd_sf"/>
</dbReference>
<dbReference type="NCBIfam" id="NF003717">
    <property type="entry name" value="PRK05327.1"/>
    <property type="match status" value="1"/>
</dbReference>
<dbReference type="NCBIfam" id="TIGR01017">
    <property type="entry name" value="rpsD_bact"/>
    <property type="match status" value="1"/>
</dbReference>
<dbReference type="PANTHER" id="PTHR11831">
    <property type="entry name" value="30S 40S RIBOSOMAL PROTEIN"/>
    <property type="match status" value="1"/>
</dbReference>
<dbReference type="PANTHER" id="PTHR11831:SF4">
    <property type="entry name" value="SMALL RIBOSOMAL SUBUNIT PROTEIN US4M"/>
    <property type="match status" value="1"/>
</dbReference>
<dbReference type="Pfam" id="PF00163">
    <property type="entry name" value="Ribosomal_S4"/>
    <property type="match status" value="1"/>
</dbReference>
<dbReference type="Pfam" id="PF01479">
    <property type="entry name" value="S4"/>
    <property type="match status" value="1"/>
</dbReference>
<dbReference type="SMART" id="SM01390">
    <property type="entry name" value="Ribosomal_S4"/>
    <property type="match status" value="1"/>
</dbReference>
<dbReference type="SMART" id="SM00363">
    <property type="entry name" value="S4"/>
    <property type="match status" value="1"/>
</dbReference>
<dbReference type="SUPFAM" id="SSF55174">
    <property type="entry name" value="Alpha-L RNA-binding motif"/>
    <property type="match status" value="1"/>
</dbReference>
<dbReference type="PROSITE" id="PS00632">
    <property type="entry name" value="RIBOSOMAL_S4"/>
    <property type="match status" value="1"/>
</dbReference>
<dbReference type="PROSITE" id="PS50889">
    <property type="entry name" value="S4"/>
    <property type="match status" value="1"/>
</dbReference>
<proteinExistence type="inferred from homology"/>
<reference key="1">
    <citation type="submission" date="2005-03" db="EMBL/GenBank/DDBJ databases">
        <title>Complete structure of the chloroplast genome of Populus alba.</title>
        <authorList>
            <person name="Okumura S."/>
            <person name="Yamashita A."/>
            <person name="Kanamoto H."/>
            <person name="Hattori M."/>
            <person name="Takase H."/>
            <person name="Tomizawa K."/>
        </authorList>
    </citation>
    <scope>NUCLEOTIDE SEQUENCE [LARGE SCALE GENOMIC DNA]</scope>
</reference>
<gene>
    <name type="primary">rps4</name>
</gene>
<sequence length="201" mass="23498">MSRYRGPRFKKIRRLGALPGLTSKRPRAGSDLRNQSRAGKKSQYRIRLEEKQKLRFHYGLTERQLLKYVRIAAKAKGSTGQVLLQLLEMRLDNILFRLGMASTIPRARQLVNHRHILVNGRIVDIPSYRCKPRDIITAKDEQKSRVMIQNSLDSFPQEELPKHLTLHPFQYKGLVNHIIDSKWIGLKINELLVVEYYSRQT</sequence>